<comment type="function">
    <text evidence="1">Catalyzes the condensation of formaldehyde and glutathione to S-hydroxymethylglutathione.</text>
</comment>
<comment type="catalytic activity">
    <reaction evidence="1">
        <text>S-(hydroxymethyl)glutathione = glutathione + formaldehyde</text>
        <dbReference type="Rhea" id="RHEA:22488"/>
        <dbReference type="ChEBI" id="CHEBI:16842"/>
        <dbReference type="ChEBI" id="CHEBI:57925"/>
        <dbReference type="ChEBI" id="CHEBI:58758"/>
        <dbReference type="EC" id="4.4.1.22"/>
    </reaction>
</comment>
<comment type="cofactor">
    <cofactor evidence="1 2">
        <name>Zn(2+)</name>
        <dbReference type="ChEBI" id="CHEBI:29105"/>
    </cofactor>
    <text evidence="1 2">Binds 2 Zn(2+) ions per subunit.</text>
</comment>
<comment type="pathway">
    <text evidence="1">One-carbon metabolism; formaldehyde degradation; formate from formaldehyde (glutathione route): step 1/3.</text>
</comment>
<comment type="similarity">
    <text evidence="3">Belongs to the Gfa family.</text>
</comment>
<accession>E3QRY8</accession>
<dbReference type="EC" id="4.4.1.22" evidence="1"/>
<dbReference type="EMBL" id="GG697372">
    <property type="protein sequence ID" value="EFQ33626.1"/>
    <property type="molecule type" value="Genomic_DNA"/>
</dbReference>
<dbReference type="RefSeq" id="XP_008097646.1">
    <property type="nucleotide sequence ID" value="XM_008099455.1"/>
</dbReference>
<dbReference type="SMR" id="E3QRY8"/>
<dbReference type="STRING" id="645133.E3QRY8"/>
<dbReference type="EnsemblFungi" id="EFQ33626">
    <property type="protein sequence ID" value="EFQ33626"/>
    <property type="gene ID" value="GLRG_08555"/>
</dbReference>
<dbReference type="GeneID" id="24413920"/>
<dbReference type="VEuPathDB" id="FungiDB:GLRG_08555"/>
<dbReference type="eggNOG" id="ENOG502SKH9">
    <property type="taxonomic scope" value="Eukaryota"/>
</dbReference>
<dbReference type="HOGENOM" id="CLU_090716_0_0_1"/>
<dbReference type="OrthoDB" id="3446116at2759"/>
<dbReference type="UniPathway" id="UPA00562">
    <property type="reaction ID" value="UER00621"/>
</dbReference>
<dbReference type="Proteomes" id="UP000008782">
    <property type="component" value="Unassembled WGS sequence"/>
</dbReference>
<dbReference type="GO" id="GO:0051907">
    <property type="term" value="F:S-(hydroxymethyl)glutathione synthase activity"/>
    <property type="evidence" value="ECO:0007669"/>
    <property type="project" value="UniProtKB-UniRule"/>
</dbReference>
<dbReference type="GO" id="GO:0008270">
    <property type="term" value="F:zinc ion binding"/>
    <property type="evidence" value="ECO:0007669"/>
    <property type="project" value="UniProtKB-UniRule"/>
</dbReference>
<dbReference type="GO" id="GO:0046294">
    <property type="term" value="P:formaldehyde catabolic process"/>
    <property type="evidence" value="ECO:0007669"/>
    <property type="project" value="UniProtKB-UniRule"/>
</dbReference>
<dbReference type="Gene3D" id="3.90.1590.10">
    <property type="entry name" value="glutathione-dependent formaldehyde- activating enzyme (gfa)"/>
    <property type="match status" value="1"/>
</dbReference>
<dbReference type="HAMAP" id="MF_00723">
    <property type="entry name" value="Formald_GSH"/>
    <property type="match status" value="1"/>
</dbReference>
<dbReference type="InterPro" id="IPR006913">
    <property type="entry name" value="CENP-V/GFA"/>
</dbReference>
<dbReference type="InterPro" id="IPR014185">
    <property type="entry name" value="Formald_GSH"/>
</dbReference>
<dbReference type="InterPro" id="IPR011057">
    <property type="entry name" value="Mss4-like_sf"/>
</dbReference>
<dbReference type="NCBIfam" id="TIGR02820">
    <property type="entry name" value="formald_GSH"/>
    <property type="match status" value="1"/>
</dbReference>
<dbReference type="NCBIfam" id="NF003829">
    <property type="entry name" value="PRK05417.1"/>
    <property type="match status" value="1"/>
</dbReference>
<dbReference type="PANTHER" id="PTHR33337:SF40">
    <property type="entry name" value="CENP-V_GFA DOMAIN-CONTAINING PROTEIN-RELATED"/>
    <property type="match status" value="1"/>
</dbReference>
<dbReference type="PANTHER" id="PTHR33337">
    <property type="entry name" value="GFA DOMAIN-CONTAINING PROTEIN"/>
    <property type="match status" value="1"/>
</dbReference>
<dbReference type="Pfam" id="PF04828">
    <property type="entry name" value="GFA"/>
    <property type="match status" value="1"/>
</dbReference>
<dbReference type="PIRSF" id="PIRSF033318">
    <property type="entry name" value="Formald_GSH"/>
    <property type="match status" value="1"/>
</dbReference>
<dbReference type="SUPFAM" id="SSF51316">
    <property type="entry name" value="Mss4-like"/>
    <property type="match status" value="1"/>
</dbReference>
<dbReference type="PROSITE" id="PS51891">
    <property type="entry name" value="CENP_V_GFA"/>
    <property type="match status" value="1"/>
</dbReference>
<protein>
    <recommendedName>
        <fullName evidence="1">Putative glutathione-dependent formaldehyde-activating enzyme</fullName>
        <ecNumber evidence="1">4.4.1.22</ecNumber>
    </recommendedName>
    <alternativeName>
        <fullName evidence="1">S-(hydroxymethyl)glutathione synthase</fullName>
    </alternativeName>
</protein>
<gene>
    <name type="ORF">GLRG_08555</name>
</gene>
<evidence type="ECO:0000255" key="1">
    <source>
        <dbReference type="HAMAP-Rule" id="MF_03142"/>
    </source>
</evidence>
<evidence type="ECO:0000255" key="2">
    <source>
        <dbReference type="PROSITE-ProRule" id="PRU01239"/>
    </source>
</evidence>
<evidence type="ECO:0000305" key="3"/>
<sequence>MAPTLHPLIDNGITKGDPNFSGGTLRCHCRSKPVEVLLGGNVAHNHACGCSKCWKPAGSLFSVVGVIPREQVKVTANEEKLHIIDDSAVILRNACKECGVHMYGRIEKPHPFKGLDFVHVELSDQKGWQEPQFAAFVSSIIEQGFNPKGTDGVRRKFKSVGLETYDTLSPTLVDLISTWTAQQNGRLPAKL</sequence>
<keyword id="KW-0456">Lyase</keyword>
<keyword id="KW-0479">Metal-binding</keyword>
<keyword id="KW-1185">Reference proteome</keyword>
<keyword id="KW-0862">Zinc</keyword>
<organism>
    <name type="scientific">Colletotrichum graminicola (strain M1.001 / M2 / FGSC 10212)</name>
    <name type="common">Maize anthracnose fungus</name>
    <name type="synonym">Glomerella graminicola</name>
    <dbReference type="NCBI Taxonomy" id="645133"/>
    <lineage>
        <taxon>Eukaryota</taxon>
        <taxon>Fungi</taxon>
        <taxon>Dikarya</taxon>
        <taxon>Ascomycota</taxon>
        <taxon>Pezizomycotina</taxon>
        <taxon>Sordariomycetes</taxon>
        <taxon>Hypocreomycetidae</taxon>
        <taxon>Glomerellales</taxon>
        <taxon>Glomerellaceae</taxon>
        <taxon>Colletotrichum</taxon>
        <taxon>Colletotrichum graminicola species complex</taxon>
    </lineage>
</organism>
<reference key="1">
    <citation type="journal article" date="2012" name="Nat. Genet.">
        <title>Lifestyle transitions in plant pathogenic Colletotrichum fungi deciphered by genome and transcriptome analyses.</title>
        <authorList>
            <person name="O'Connell R.J."/>
            <person name="Thon M.R."/>
            <person name="Hacquard S."/>
            <person name="Amyotte S.G."/>
            <person name="Kleemann J."/>
            <person name="Torres M.F."/>
            <person name="Damm U."/>
            <person name="Buiate E.A."/>
            <person name="Epstein L."/>
            <person name="Alkan N."/>
            <person name="Altmueller J."/>
            <person name="Alvarado-Balderrama L."/>
            <person name="Bauser C.A."/>
            <person name="Becker C."/>
            <person name="Birren B.W."/>
            <person name="Chen Z."/>
            <person name="Choi J."/>
            <person name="Crouch J.A."/>
            <person name="Duvick J.P."/>
            <person name="Farman M.A."/>
            <person name="Gan P."/>
            <person name="Heiman D."/>
            <person name="Henrissat B."/>
            <person name="Howard R.J."/>
            <person name="Kabbage M."/>
            <person name="Koch C."/>
            <person name="Kracher B."/>
            <person name="Kubo Y."/>
            <person name="Law A.D."/>
            <person name="Lebrun M.-H."/>
            <person name="Lee Y.-H."/>
            <person name="Miyara I."/>
            <person name="Moore N."/>
            <person name="Neumann U."/>
            <person name="Nordstroem K."/>
            <person name="Panaccione D.G."/>
            <person name="Panstruga R."/>
            <person name="Place M."/>
            <person name="Proctor R.H."/>
            <person name="Prusky D."/>
            <person name="Rech G."/>
            <person name="Reinhardt R."/>
            <person name="Rollins J.A."/>
            <person name="Rounsley S."/>
            <person name="Schardl C.L."/>
            <person name="Schwartz D.C."/>
            <person name="Shenoy N."/>
            <person name="Shirasu K."/>
            <person name="Sikhakolli U.R."/>
            <person name="Stueber K."/>
            <person name="Sukno S.A."/>
            <person name="Sweigard J.A."/>
            <person name="Takano Y."/>
            <person name="Takahara H."/>
            <person name="Trail F."/>
            <person name="van der Does H.C."/>
            <person name="Voll L.M."/>
            <person name="Will I."/>
            <person name="Young S."/>
            <person name="Zeng Q."/>
            <person name="Zhang J."/>
            <person name="Zhou S."/>
            <person name="Dickman M.B."/>
            <person name="Schulze-Lefert P."/>
            <person name="Ver Loren van Themaat E."/>
            <person name="Ma L.-J."/>
            <person name="Vaillancourt L.J."/>
        </authorList>
    </citation>
    <scope>NUCLEOTIDE SEQUENCE [LARGE SCALE GENOMIC DNA]</scope>
    <source>
        <strain>M1.001 / M2 / FGSC 10212</strain>
    </source>
</reference>
<feature type="chain" id="PRO_0000406158" description="Putative glutathione-dependent formaldehyde-activating enzyme">
    <location>
        <begin position="1"/>
        <end position="191"/>
    </location>
</feature>
<feature type="domain" description="CENP-V/GFA" evidence="2">
    <location>
        <begin position="20"/>
        <end position="166"/>
    </location>
</feature>
<feature type="binding site" evidence="1 2">
    <location>
        <position position="27"/>
    </location>
    <ligand>
        <name>Zn(2+)</name>
        <dbReference type="ChEBI" id="CHEBI:29105"/>
        <label>1</label>
        <note>structural</note>
    </ligand>
</feature>
<feature type="binding site" evidence="1 2">
    <location>
        <position position="29"/>
    </location>
    <ligand>
        <name>Zn(2+)</name>
        <dbReference type="ChEBI" id="CHEBI:29105"/>
        <label>1</label>
        <note>structural</note>
    </ligand>
</feature>
<feature type="binding site" evidence="1 2">
    <location>
        <position position="48"/>
    </location>
    <ligand>
        <name>Zn(2+)</name>
        <dbReference type="ChEBI" id="CHEBI:29105"/>
        <label>2</label>
        <note>catalytic</note>
    </ligand>
</feature>
<feature type="binding site" evidence="1 2">
    <location>
        <position position="50"/>
    </location>
    <ligand>
        <name>Zn(2+)</name>
        <dbReference type="ChEBI" id="CHEBI:29105"/>
        <label>2</label>
        <note>catalytic</note>
    </ligand>
</feature>
<feature type="binding site" evidence="1 2">
    <location>
        <position position="53"/>
    </location>
    <ligand>
        <name>Zn(2+)</name>
        <dbReference type="ChEBI" id="CHEBI:29105"/>
        <label>2</label>
        <note>catalytic</note>
    </ligand>
</feature>
<feature type="binding site" evidence="1 2">
    <location>
        <position position="95"/>
    </location>
    <ligand>
        <name>Zn(2+)</name>
        <dbReference type="ChEBI" id="CHEBI:29105"/>
        <label>1</label>
        <note>structural</note>
    </ligand>
</feature>
<feature type="binding site" evidence="1 2">
    <location>
        <position position="98"/>
    </location>
    <ligand>
        <name>Zn(2+)</name>
        <dbReference type="ChEBI" id="CHEBI:29105"/>
        <label>1</label>
        <note>structural</note>
    </ligand>
</feature>
<name>GFA_COLGM</name>
<proteinExistence type="inferred from homology"/>